<protein>
    <recommendedName>
        <fullName>Tenecin-1</fullName>
    </recommendedName>
</protein>
<reference key="1">
    <citation type="journal article" date="1994" name="J. Biochem.">
        <title>Purification and molecular cloning of cDNA for an inducible antibacterial protein from larvae of the coleopteran, Tenebrio molitor.</title>
        <authorList>
            <person name="Moon H.J."/>
            <person name="Lee S.Y."/>
            <person name="Kurata S."/>
            <person name="Natori S."/>
            <person name="Lee B.L."/>
        </authorList>
    </citation>
    <scope>NUCLEOTIDE SEQUENCE [MRNA]</scope>
    <scope>PROTEIN SEQUENCE OF 49-59</scope>
    <scope>DISULFIDE BONDS</scope>
    <source>
        <tissue>Larval hemolymph</tissue>
    </source>
</reference>
<feature type="signal peptide" evidence="1">
    <location>
        <begin position="1"/>
        <end position="19"/>
    </location>
</feature>
<feature type="propeptide" id="PRO_0000006754">
    <location>
        <begin position="20"/>
        <end position="41"/>
    </location>
</feature>
<feature type="chain" id="PRO_0000006755" description="Tenecin-1">
    <location>
        <begin position="42"/>
        <end position="84"/>
    </location>
</feature>
<feature type="disulfide bond" evidence="2 3">
    <location>
        <begin position="44"/>
        <end position="75"/>
    </location>
</feature>
<feature type="disulfide bond" evidence="2 3">
    <location>
        <begin position="61"/>
        <end position="81"/>
    </location>
</feature>
<feature type="disulfide bond" evidence="2 3">
    <location>
        <begin position="65"/>
        <end position="83"/>
    </location>
</feature>
<name>DEFI_TENMO</name>
<sequence>MKLTIFALVACFFILQIAAFPLEEAATAEEIEQGEHIRVKRVTCDILSVEAKGVKLNDAACAAHCLFRGRSGGYCNGKRVCVCR</sequence>
<evidence type="ECO:0000255" key="1"/>
<evidence type="ECO:0000255" key="2">
    <source>
        <dbReference type="PROSITE-ProRule" id="PRU00710"/>
    </source>
</evidence>
<evidence type="ECO:0000269" key="3">
    <source>
    </source>
</evidence>
<keyword id="KW-0044">Antibiotic</keyword>
<keyword id="KW-0929">Antimicrobial</keyword>
<keyword id="KW-0165">Cleavage on pair of basic residues</keyword>
<keyword id="KW-0211">Defensin</keyword>
<keyword id="KW-0903">Direct protein sequencing</keyword>
<keyword id="KW-1015">Disulfide bond</keyword>
<keyword id="KW-0391">Immunity</keyword>
<keyword id="KW-0399">Innate immunity</keyword>
<keyword id="KW-0964">Secreted</keyword>
<keyword id="KW-0732">Signal</keyword>
<dbReference type="EMBL" id="D17670">
    <property type="protein sequence ID" value="BAA04552.1"/>
    <property type="molecule type" value="mRNA"/>
</dbReference>
<dbReference type="PIR" id="JX0332">
    <property type="entry name" value="JX0332"/>
</dbReference>
<dbReference type="TCDB" id="1.C.47.1.4">
    <property type="family name" value="the insect/fungal defensin (insect/fungal defensin) family"/>
</dbReference>
<dbReference type="GO" id="GO:0005615">
    <property type="term" value="C:extracellular space"/>
    <property type="evidence" value="ECO:0007669"/>
    <property type="project" value="TreeGrafter"/>
</dbReference>
<dbReference type="GO" id="GO:0042742">
    <property type="term" value="P:defense response to bacterium"/>
    <property type="evidence" value="ECO:0007669"/>
    <property type="project" value="UniProtKB-KW"/>
</dbReference>
<dbReference type="GO" id="GO:0006959">
    <property type="term" value="P:humoral immune response"/>
    <property type="evidence" value="ECO:0007669"/>
    <property type="project" value="TreeGrafter"/>
</dbReference>
<dbReference type="GO" id="GO:0045087">
    <property type="term" value="P:innate immune response"/>
    <property type="evidence" value="ECO:0007669"/>
    <property type="project" value="UniProtKB-KW"/>
</dbReference>
<dbReference type="CDD" id="cd21806">
    <property type="entry name" value="DEFL_defensin-like"/>
    <property type="match status" value="1"/>
</dbReference>
<dbReference type="FunFam" id="3.30.30.10:FF:000005">
    <property type="entry name" value="Defensin"/>
    <property type="match status" value="1"/>
</dbReference>
<dbReference type="Gene3D" id="3.30.30.10">
    <property type="entry name" value="Knottin, scorpion toxin-like"/>
    <property type="match status" value="1"/>
</dbReference>
<dbReference type="InterPro" id="IPR001542">
    <property type="entry name" value="Defensin_invertebrate/fungal"/>
</dbReference>
<dbReference type="InterPro" id="IPR003614">
    <property type="entry name" value="Scorpion_toxin-like"/>
</dbReference>
<dbReference type="InterPro" id="IPR036574">
    <property type="entry name" value="Scorpion_toxin-like_sf"/>
</dbReference>
<dbReference type="PANTHER" id="PTHR13645">
    <property type="entry name" value="DEFENSIN"/>
    <property type="match status" value="1"/>
</dbReference>
<dbReference type="PANTHER" id="PTHR13645:SF0">
    <property type="entry name" value="DEFENSIN"/>
    <property type="match status" value="1"/>
</dbReference>
<dbReference type="Pfam" id="PF01097">
    <property type="entry name" value="Defensin_2"/>
    <property type="match status" value="1"/>
</dbReference>
<dbReference type="SMART" id="SM00505">
    <property type="entry name" value="Knot1"/>
    <property type="match status" value="1"/>
</dbReference>
<dbReference type="SUPFAM" id="SSF57095">
    <property type="entry name" value="Scorpion toxin-like"/>
    <property type="match status" value="1"/>
</dbReference>
<dbReference type="PROSITE" id="PS51378">
    <property type="entry name" value="INVERT_DEFENSINS"/>
    <property type="match status" value="1"/>
</dbReference>
<proteinExistence type="evidence at protein level"/>
<accession>Q27023</accession>
<organism>
    <name type="scientific">Tenebrio molitor</name>
    <name type="common">Yellow mealworm beetle</name>
    <dbReference type="NCBI Taxonomy" id="7067"/>
    <lineage>
        <taxon>Eukaryota</taxon>
        <taxon>Metazoa</taxon>
        <taxon>Ecdysozoa</taxon>
        <taxon>Arthropoda</taxon>
        <taxon>Hexapoda</taxon>
        <taxon>Insecta</taxon>
        <taxon>Pterygota</taxon>
        <taxon>Neoptera</taxon>
        <taxon>Endopterygota</taxon>
        <taxon>Coleoptera</taxon>
        <taxon>Polyphaga</taxon>
        <taxon>Cucujiformia</taxon>
        <taxon>Tenebrionidae</taxon>
        <taxon>Tenebrio</taxon>
    </lineage>
</organism>
<comment type="function">
    <text>Bactericidal protein produced in response to injury. It is cytotoxic to Gram-positive bacteria.</text>
</comment>
<comment type="subcellular location">
    <subcellularLocation>
        <location>Secreted</location>
    </subcellularLocation>
</comment>
<comment type="similarity">
    <text evidence="2">Belongs to the invertebrate defensin family. Type 1 subfamily.</text>
</comment>